<reference key="1">
    <citation type="submission" date="2002-11" db="EMBL/GenBank/DDBJ databases">
        <title>The nucleotide sequence of a long cDNA clone isolated from human.</title>
        <authorList>
            <person name="Nagase T."/>
            <person name="Kikuno R."/>
            <person name="Ohara O."/>
        </authorList>
    </citation>
    <scope>NUCLEOTIDE SEQUENCE [LARGE SCALE MRNA] (ISOFORM 3)</scope>
    <source>
        <tissue>Brain</tissue>
    </source>
</reference>
<reference key="2">
    <citation type="journal article" date="2004" name="Nat. Genet.">
        <title>Complete sequencing and characterization of 21,243 full-length human cDNAs.</title>
        <authorList>
            <person name="Ota T."/>
            <person name="Suzuki Y."/>
            <person name="Nishikawa T."/>
            <person name="Otsuki T."/>
            <person name="Sugiyama T."/>
            <person name="Irie R."/>
            <person name="Wakamatsu A."/>
            <person name="Hayashi K."/>
            <person name="Sato H."/>
            <person name="Nagai K."/>
            <person name="Kimura K."/>
            <person name="Makita H."/>
            <person name="Sekine M."/>
            <person name="Obayashi M."/>
            <person name="Nishi T."/>
            <person name="Shibahara T."/>
            <person name="Tanaka T."/>
            <person name="Ishii S."/>
            <person name="Yamamoto J."/>
            <person name="Saito K."/>
            <person name="Kawai Y."/>
            <person name="Isono Y."/>
            <person name="Nakamura Y."/>
            <person name="Nagahari K."/>
            <person name="Murakami K."/>
            <person name="Yasuda T."/>
            <person name="Iwayanagi T."/>
            <person name="Wagatsuma M."/>
            <person name="Shiratori A."/>
            <person name="Sudo H."/>
            <person name="Hosoiri T."/>
            <person name="Kaku Y."/>
            <person name="Kodaira H."/>
            <person name="Kondo H."/>
            <person name="Sugawara M."/>
            <person name="Takahashi M."/>
            <person name="Kanda K."/>
            <person name="Yokoi T."/>
            <person name="Furuya T."/>
            <person name="Kikkawa E."/>
            <person name="Omura Y."/>
            <person name="Abe K."/>
            <person name="Kamihara K."/>
            <person name="Katsuta N."/>
            <person name="Sato K."/>
            <person name="Tanikawa M."/>
            <person name="Yamazaki M."/>
            <person name="Ninomiya K."/>
            <person name="Ishibashi T."/>
            <person name="Yamashita H."/>
            <person name="Murakawa K."/>
            <person name="Fujimori K."/>
            <person name="Tanai H."/>
            <person name="Kimata M."/>
            <person name="Watanabe M."/>
            <person name="Hiraoka S."/>
            <person name="Chiba Y."/>
            <person name="Ishida S."/>
            <person name="Ono Y."/>
            <person name="Takiguchi S."/>
            <person name="Watanabe S."/>
            <person name="Yosida M."/>
            <person name="Hotuta T."/>
            <person name="Kusano J."/>
            <person name="Kanehori K."/>
            <person name="Takahashi-Fujii A."/>
            <person name="Hara H."/>
            <person name="Tanase T.-O."/>
            <person name="Nomura Y."/>
            <person name="Togiya S."/>
            <person name="Komai F."/>
            <person name="Hara R."/>
            <person name="Takeuchi K."/>
            <person name="Arita M."/>
            <person name="Imose N."/>
            <person name="Musashino K."/>
            <person name="Yuuki H."/>
            <person name="Oshima A."/>
            <person name="Sasaki N."/>
            <person name="Aotsuka S."/>
            <person name="Yoshikawa Y."/>
            <person name="Matsunawa H."/>
            <person name="Ichihara T."/>
            <person name="Shiohata N."/>
            <person name="Sano S."/>
            <person name="Moriya S."/>
            <person name="Momiyama H."/>
            <person name="Satoh N."/>
            <person name="Takami S."/>
            <person name="Terashima Y."/>
            <person name="Suzuki O."/>
            <person name="Nakagawa S."/>
            <person name="Senoh A."/>
            <person name="Mizoguchi H."/>
            <person name="Goto Y."/>
            <person name="Shimizu F."/>
            <person name="Wakebe H."/>
            <person name="Hishigaki H."/>
            <person name="Watanabe T."/>
            <person name="Sugiyama A."/>
            <person name="Takemoto M."/>
            <person name="Kawakami B."/>
            <person name="Yamazaki M."/>
            <person name="Watanabe K."/>
            <person name="Kumagai A."/>
            <person name="Itakura S."/>
            <person name="Fukuzumi Y."/>
            <person name="Fujimori Y."/>
            <person name="Komiyama M."/>
            <person name="Tashiro H."/>
            <person name="Tanigami A."/>
            <person name="Fujiwara T."/>
            <person name="Ono T."/>
            <person name="Yamada K."/>
            <person name="Fujii Y."/>
            <person name="Ozaki K."/>
            <person name="Hirao M."/>
            <person name="Ohmori Y."/>
            <person name="Kawabata A."/>
            <person name="Hikiji T."/>
            <person name="Kobatake N."/>
            <person name="Inagaki H."/>
            <person name="Ikema Y."/>
            <person name="Okamoto S."/>
            <person name="Okitani R."/>
            <person name="Kawakami T."/>
            <person name="Noguchi S."/>
            <person name="Itoh T."/>
            <person name="Shigeta K."/>
            <person name="Senba T."/>
            <person name="Matsumura K."/>
            <person name="Nakajima Y."/>
            <person name="Mizuno T."/>
            <person name="Morinaga M."/>
            <person name="Sasaki M."/>
            <person name="Togashi T."/>
            <person name="Oyama M."/>
            <person name="Hata H."/>
            <person name="Watanabe M."/>
            <person name="Komatsu T."/>
            <person name="Mizushima-Sugano J."/>
            <person name="Satoh T."/>
            <person name="Shirai Y."/>
            <person name="Takahashi Y."/>
            <person name="Nakagawa K."/>
            <person name="Okumura K."/>
            <person name="Nagase T."/>
            <person name="Nomura N."/>
            <person name="Kikuchi H."/>
            <person name="Masuho Y."/>
            <person name="Yamashita R."/>
            <person name="Nakai K."/>
            <person name="Yada T."/>
            <person name="Nakamura Y."/>
            <person name="Ohara O."/>
            <person name="Isogai T."/>
            <person name="Sugano S."/>
        </authorList>
    </citation>
    <scope>NUCLEOTIDE SEQUENCE [LARGE SCALE MRNA] (ISOFORM 2)</scope>
    <scope>NUCLEOTIDE SEQUENCE [LARGE SCALE MRNA] OF 1092-1888 (ISOFORM 1)</scope>
    <scope>NUCLEOTIDE SEQUENCE [LARGE SCALE MRNA] OF 1330-1888 (ISOFORM 4)</scope>
    <source>
        <tissue>Brain</tissue>
        <tissue>Testis</tissue>
        <tissue>Tongue</tissue>
        <tissue>Trachea</tissue>
    </source>
</reference>
<reference key="3">
    <citation type="journal article" date="2005" name="Nature">
        <title>Generation and annotation of the DNA sequences of human chromosomes 2 and 4.</title>
        <authorList>
            <person name="Hillier L.W."/>
            <person name="Graves T.A."/>
            <person name="Fulton R.S."/>
            <person name="Fulton L.A."/>
            <person name="Pepin K.H."/>
            <person name="Minx P."/>
            <person name="Wagner-McPherson C."/>
            <person name="Layman D."/>
            <person name="Wylie K."/>
            <person name="Sekhon M."/>
            <person name="Becker M.C."/>
            <person name="Fewell G.A."/>
            <person name="Delehaunty K.D."/>
            <person name="Miner T.L."/>
            <person name="Nash W.E."/>
            <person name="Kremitzki C."/>
            <person name="Oddy L."/>
            <person name="Du H."/>
            <person name="Sun H."/>
            <person name="Bradshaw-Cordum H."/>
            <person name="Ali J."/>
            <person name="Carter J."/>
            <person name="Cordes M."/>
            <person name="Harris A."/>
            <person name="Isak A."/>
            <person name="van Brunt A."/>
            <person name="Nguyen C."/>
            <person name="Du F."/>
            <person name="Courtney L."/>
            <person name="Kalicki J."/>
            <person name="Ozersky P."/>
            <person name="Abbott S."/>
            <person name="Armstrong J."/>
            <person name="Belter E.A."/>
            <person name="Caruso L."/>
            <person name="Cedroni M."/>
            <person name="Cotton M."/>
            <person name="Davidson T."/>
            <person name="Desai A."/>
            <person name="Elliott G."/>
            <person name="Erb T."/>
            <person name="Fronick C."/>
            <person name="Gaige T."/>
            <person name="Haakenson W."/>
            <person name="Haglund K."/>
            <person name="Holmes A."/>
            <person name="Harkins R."/>
            <person name="Kim K."/>
            <person name="Kruchowski S.S."/>
            <person name="Strong C.M."/>
            <person name="Grewal N."/>
            <person name="Goyea E."/>
            <person name="Hou S."/>
            <person name="Levy A."/>
            <person name="Martinka S."/>
            <person name="Mead K."/>
            <person name="McLellan M.D."/>
            <person name="Meyer R."/>
            <person name="Randall-Maher J."/>
            <person name="Tomlinson C."/>
            <person name="Dauphin-Kohlberg S."/>
            <person name="Kozlowicz-Reilly A."/>
            <person name="Shah N."/>
            <person name="Swearengen-Shahid S."/>
            <person name="Snider J."/>
            <person name="Strong J.T."/>
            <person name="Thompson J."/>
            <person name="Yoakum M."/>
            <person name="Leonard S."/>
            <person name="Pearman C."/>
            <person name="Trani L."/>
            <person name="Radionenko M."/>
            <person name="Waligorski J.E."/>
            <person name="Wang C."/>
            <person name="Rock S.M."/>
            <person name="Tin-Wollam A.-M."/>
            <person name="Maupin R."/>
            <person name="Latreille P."/>
            <person name="Wendl M.C."/>
            <person name="Yang S.-P."/>
            <person name="Pohl C."/>
            <person name="Wallis J.W."/>
            <person name="Spieth J."/>
            <person name="Bieri T.A."/>
            <person name="Berkowicz N."/>
            <person name="Nelson J.O."/>
            <person name="Osborne J."/>
            <person name="Ding L."/>
            <person name="Meyer R."/>
            <person name="Sabo A."/>
            <person name="Shotland Y."/>
            <person name="Sinha P."/>
            <person name="Wohldmann P.E."/>
            <person name="Cook L.L."/>
            <person name="Hickenbotham M.T."/>
            <person name="Eldred J."/>
            <person name="Williams D."/>
            <person name="Jones T.A."/>
            <person name="She X."/>
            <person name="Ciccarelli F.D."/>
            <person name="Izaurralde E."/>
            <person name="Taylor J."/>
            <person name="Schmutz J."/>
            <person name="Myers R.M."/>
            <person name="Cox D.R."/>
            <person name="Huang X."/>
            <person name="McPherson J.D."/>
            <person name="Mardis E.R."/>
            <person name="Clifton S.W."/>
            <person name="Warren W.C."/>
            <person name="Chinwalla A.T."/>
            <person name="Eddy S.R."/>
            <person name="Marra M.A."/>
            <person name="Ovcharenko I."/>
            <person name="Furey T.S."/>
            <person name="Miller W."/>
            <person name="Eichler E.E."/>
            <person name="Bork P."/>
            <person name="Suyama M."/>
            <person name="Torrents D."/>
            <person name="Waterston R.H."/>
            <person name="Wilson R.K."/>
        </authorList>
    </citation>
    <scope>NUCLEOTIDE SEQUENCE [LARGE SCALE GENOMIC DNA]</scope>
</reference>
<reference key="4">
    <citation type="journal article" date="2007" name="BMC Genomics">
        <title>The full-ORF clone resource of the German cDNA consortium.</title>
        <authorList>
            <person name="Bechtel S."/>
            <person name="Rosenfelder H."/>
            <person name="Duda A."/>
            <person name="Schmidt C.P."/>
            <person name="Ernst U."/>
            <person name="Wellenreuther R."/>
            <person name="Mehrle A."/>
            <person name="Schuster C."/>
            <person name="Bahr A."/>
            <person name="Bloecker H."/>
            <person name="Heubner D."/>
            <person name="Hoerlein A."/>
            <person name="Michel G."/>
            <person name="Wedler H."/>
            <person name="Koehrer K."/>
            <person name="Ottenwaelder B."/>
            <person name="Poustka A."/>
            <person name="Wiemann S."/>
            <person name="Schupp I."/>
        </authorList>
    </citation>
    <scope>NUCLEOTIDE SEQUENCE [LARGE SCALE MRNA] OF 1432-1888 (ISOFORMS 1/2)</scope>
    <source>
        <tissue>Testis</tissue>
    </source>
</reference>
<reference key="5">
    <citation type="journal article" date="2016" name="Elife">
        <title>The E3 ligase Ubr3 regulates Usher syndrome and MYH9 disorder proteins in the auditory organs of Drosophila and mammals.</title>
        <authorList>
            <person name="Li T."/>
            <person name="Giagtzoglou N."/>
            <person name="Eberl D.F."/>
            <person name="Jaiswal S.N."/>
            <person name="Cai T."/>
            <person name="Godt D."/>
            <person name="Groves A.K."/>
            <person name="Bellen H.J."/>
        </authorList>
    </citation>
    <scope>FUNCTION</scope>
</reference>
<sequence length="1888" mass="212433">MAAAAAAAVGGQQPSQPELPAPGLALDKAATAAHLKAALSRPDNRAGAEELQALLERVLSAERPLAAAAGGEDAAAAGGGGGPGAAEEEALEWCKCLLAGGGGYDEFCAAVRAYDPAALCGLVWTANFVAYRCRTCGISPCMSLCAECFHQGDHTGHDFNMFRSQAGGACDCGDSNVMRESGFCKRHQIKSSSNIPCVPKDLLMMSEFVLPRFIFCLIQYLREGYNEPAADGPSEKDLNKVLQLLEPQISFLEDLTKMGGAMRSVLTQVLTNQQNYKDLTSGLGENACVKKSHEKYLIALKSSGLTYPEDKLVYGVQEPSAGTSSLAVQGFIGATGTLGQVDSSDEDDQDGSQGLGKRKRVKLSSGTKDQSIMDVLKHKSFLEELLFWTIKYEFPQKMVTFLLNMLPDQEYKVAFTKTFVQHYAFIMKTLKKSHESDTMSNRIVHISVQLFSNEELARQVTEECQLLDIMVTVLLYMMESCLIKSELQDEENSLHVVVNCGEALLKNNTYWPLVSDFINILSHQSVAKRFLEDHGLLVTWMNFVSFFQGMNLNKRELNEHVEFESQTYYAAFAAELEACAQPMWGLLSHCKVRETQEYTRNVVRYCLEALQDWFDAINFVDEPAPNQVTFHLPLHRYYAMFLSKAVKCQELDLDSVLPDQEMLMKLMIHPLQIQASLAEIHSNMWVRNGLQIKGQAMTYVQSHFCNSMIDPDIYLLQVCASRLDPDYFISSVFERFKVVDLLTMASQHQNTVLDAEHERSMLEGALTFLVILLSLRLHLGMSDDEILRAEMVAQLCMNDRTHSSLLDLIPENPNPKSGIIPGSYSFESVLSAVADFKAPVFEPGGSMQQGMYTPKAEVWDQEFDPVMVILRTVYRRDVQSAMDRYTAFLKQSGKFPGNPWPPYKKRTSLHPSYKGLMRLLHCKTLHIVLFTLLYKILMDHQNLSEHVLCMVLYLIELGLENSAEEESDEEASVGGPERCHDSWFPGSNLVSNMRHFINYVRVRVPETAPEVKRDSPASTSSDNLGSLQNSGTAQVFSLVAERRKKFQEIINRSSSEANQVVRPKTSSKWSAPGSAPQLTTAILEIKESILSLLIKLHHKLSGKQNSYYPPWLDDIEILIQPEIPKYSHGDGITAVERILLKAASQSRMNKRIIEEICRKVTPPVPPKKVTAAEKKTLDKEERRQKARERQQKLLAEFASRQKSFMETAMDVDSPENDIPMEITTAEPQVSEAVYDCVICGQSGPSSEDRPTGLVVLLQASSVLGQCRDNVEPKKLPISEEEQIYPWDTCAAVHDVRLSLLQRYFKDSSCLLAVSIGWEGGVYVQTCGHTLHIDCHKSYMESLRNDQVLQGFSVDKGEFTCPLCRQFANSVLPCYPGSNVENNPWQRPSNKSIQDLIKEVEELQGRPGAFPSETNLSKEMESVMKDIKNTTQKKYRDYSKTPGSPDNDFLFMYSVARTNLELELIHRGGNLCSGGASTAGKRSCLNQLFHVLALHMRLYSIDSEYNPWRKLTQLEEMNPQLGYEEQQPEVPILYHDVTSLLLIQILMMPQPLRKDHFTCIVKVLFTLLYTQALAALSVKCSEEDRSAWKHAGALKKSTCDAEKSYEVLLSFVISELFKGKLYHEEGTQECAMVNPIAWSPESMEKCLQDFCLPFLRITSLLQHHLFGEDLPSCQEEEEFSVLASCLGLLPTFYQTEHPFISASCLDWPVPAFDIITQWCFEIKSFTERHAEQGKALLIQESKWKLPHLLQLPENYNTIFQYYHRKTCSVCTKVPKDPAVCLVCGTFVCLKGLCCKQQSYCECVLHSQNCGAGTGIFLLINASVIIIIRGHRFCLWGSVYLDAHGEEDRDLRRGKPLYICKERYKVLEQQWISHTFDHINKRWGPHYNGL</sequence>
<proteinExistence type="evidence at protein level"/>
<organism>
    <name type="scientific">Homo sapiens</name>
    <name type="common">Human</name>
    <dbReference type="NCBI Taxonomy" id="9606"/>
    <lineage>
        <taxon>Eukaryota</taxon>
        <taxon>Metazoa</taxon>
        <taxon>Chordata</taxon>
        <taxon>Craniata</taxon>
        <taxon>Vertebrata</taxon>
        <taxon>Euteleostomi</taxon>
        <taxon>Mammalia</taxon>
        <taxon>Eutheria</taxon>
        <taxon>Euarchontoglires</taxon>
        <taxon>Primates</taxon>
        <taxon>Haplorrhini</taxon>
        <taxon>Catarrhini</taxon>
        <taxon>Hominidae</taxon>
        <taxon>Homo</taxon>
    </lineage>
</organism>
<evidence type="ECO:0000250" key="1">
    <source>
        <dbReference type="UniProtKB" id="Q5U430"/>
    </source>
</evidence>
<evidence type="ECO:0000255" key="2"/>
<evidence type="ECO:0000255" key="3">
    <source>
        <dbReference type="PROSITE-ProRule" id="PRU00508"/>
    </source>
</evidence>
<evidence type="ECO:0000256" key="4">
    <source>
        <dbReference type="SAM" id="MobiDB-lite"/>
    </source>
</evidence>
<evidence type="ECO:0000269" key="5">
    <source>
    </source>
</evidence>
<evidence type="ECO:0000303" key="6">
    <source>
    </source>
</evidence>
<evidence type="ECO:0000303" key="7">
    <source ref="1"/>
</evidence>
<evidence type="ECO:0000305" key="8"/>
<accession>Q6ZT12</accession>
<accession>B4DZR7</accession>
<accession>Q2KHN5</accession>
<accession>Q6ZR55</accession>
<accession>Q6ZSC2</accession>
<accession>Q8IVE7</accession>
<accession>Q8ND96</accession>
<comment type="function">
    <text evidence="1 5">E3 ubiquitin-protein ligase which is a component of the N-end rule pathway (By similarity). Does not bind to proteins bearing specific N-terminal residues that are destabilizing according to the N-end rule, leading to their ubiquitination and subsequent degradation (By similarity). May play a role in Shh signaling by mediating the ubiquitination of Kif7 (By similarity). May be important for MYH9 function in certain tissues, possibly by regulating the ubiquitination of MYH9 and consequently affecting its interaction with MYO7A (PubMed:27331610).</text>
</comment>
<comment type="catalytic activity">
    <reaction>
        <text>S-ubiquitinyl-[E2 ubiquitin-conjugating enzyme]-L-cysteine + [acceptor protein]-L-lysine = [E2 ubiquitin-conjugating enzyme]-L-cysteine + N(6)-ubiquitinyl-[acceptor protein]-L-lysine.</text>
        <dbReference type="EC" id="2.3.2.27"/>
    </reaction>
</comment>
<comment type="pathway">
    <text>Protein modification; protein ubiquitination.</text>
</comment>
<comment type="subunit">
    <text evidence="1">Interacts with UBE2A and UBE2B.</text>
</comment>
<comment type="subcellular location">
    <subcellularLocation>
        <location evidence="8">Membrane</location>
        <topology evidence="8">Multi-pass membrane protein</topology>
    </subcellularLocation>
</comment>
<comment type="alternative products">
    <event type="alternative splicing"/>
    <isoform>
        <id>Q6ZT12-1</id>
        <name>1</name>
        <sequence type="displayed"/>
    </isoform>
    <isoform>
        <id>Q6ZT12-2</id>
        <name>2</name>
        <sequence type="described" ref="VSP_030354 VSP_023142"/>
    </isoform>
    <isoform>
        <id>Q6ZT12-3</id>
        <name>3</name>
        <sequence type="described" ref="VSP_023141"/>
    </isoform>
    <isoform>
        <id>Q6ZT12-4</id>
        <name>4</name>
        <sequence type="described" ref="VSP_036405"/>
    </isoform>
</comment>
<comment type="similarity">
    <text evidence="8">Belongs to the E3 ubiquitin-protein ligase UBR1-like family.</text>
</comment>
<comment type="sequence caution" evidence="8">
    <conflict type="erroneous initiation">
        <sequence resource="EMBL-CDS" id="BAC23120"/>
    </conflict>
</comment>
<comment type="sequence caution" evidence="8">
    <conflict type="erroneous initiation">
        <sequence resource="EMBL-CDS" id="BAC86783"/>
    </conflict>
</comment>
<comment type="sequence caution" evidence="8">
    <conflict type="erroneous initiation">
        <sequence resource="EMBL-CDS" id="BAC87032"/>
    </conflict>
</comment>
<comment type="sequence caution" evidence="8">
    <conflict type="erroneous initiation">
        <sequence resource="EMBL-CDS" id="BAG64179"/>
    </conflict>
</comment>
<comment type="sequence caution" evidence="8">
    <conflict type="erroneous termination">
        <sequence resource="EMBL-CDS" id="CAD38857"/>
    </conflict>
    <text>Truncated C-terminus.</text>
</comment>
<feature type="chain" id="PRO_0000278184" description="E3 ubiquitin-protein ligase UBR3">
    <location>
        <begin position="1"/>
        <end position="1888"/>
    </location>
</feature>
<feature type="transmembrane region" description="Helical" evidence="2">
    <location>
        <begin position="761"/>
        <end position="781"/>
    </location>
</feature>
<feature type="transmembrane region" description="Helical" evidence="2">
    <location>
        <begin position="919"/>
        <end position="939"/>
    </location>
</feature>
<feature type="transmembrane region" description="Helical" evidence="2">
    <location>
        <begin position="1806"/>
        <end position="1826"/>
    </location>
</feature>
<feature type="zinc finger region" description="UBR-type" evidence="3">
    <location>
        <begin position="118"/>
        <end position="189"/>
    </location>
</feature>
<feature type="zinc finger region" description="RING-type; degenerate">
    <location>
        <begin position="1306"/>
        <end position="1364"/>
    </location>
</feature>
<feature type="region of interest" description="Disordered" evidence="4">
    <location>
        <begin position="1"/>
        <end position="24"/>
    </location>
</feature>
<feature type="region of interest" description="Disordered" evidence="4">
    <location>
        <begin position="339"/>
        <end position="362"/>
    </location>
</feature>
<feature type="region of interest" description="Disordered" evidence="4">
    <location>
        <begin position="1008"/>
        <end position="1028"/>
    </location>
</feature>
<feature type="region of interest" description="Disordered" evidence="4">
    <location>
        <begin position="1164"/>
        <end position="1186"/>
    </location>
</feature>
<feature type="coiled-coil region" evidence="2">
    <location>
        <begin position="1168"/>
        <end position="1199"/>
    </location>
</feature>
<feature type="compositionally biased region" description="Polar residues" evidence="4">
    <location>
        <begin position="1016"/>
        <end position="1028"/>
    </location>
</feature>
<feature type="compositionally biased region" description="Basic and acidic residues" evidence="4">
    <location>
        <begin position="1170"/>
        <end position="1186"/>
    </location>
</feature>
<feature type="modified residue" description="Phosphoserine" evidence="1">
    <location>
        <position position="343"/>
    </location>
</feature>
<feature type="modified residue" description="Phosphoserine" evidence="1">
    <location>
        <position position="344"/>
    </location>
</feature>
<feature type="modified residue" description="Phosphoserine" evidence="1">
    <location>
        <position position="1199"/>
    </location>
</feature>
<feature type="splice variant" id="VSP_023141" description="In isoform 3." evidence="7">
    <location>
        <begin position="1"/>
        <end position="1494"/>
    </location>
</feature>
<feature type="splice variant" id="VSP_030354" description="In isoform 2." evidence="6">
    <location>
        <begin position="1"/>
        <end position="1179"/>
    </location>
</feature>
<feature type="splice variant" id="VSP_023142" description="In isoform 2." evidence="6">
    <original>EERRQKARERQQKLLAEFASRQKSFMETAMDV</original>
    <variation>MIASKQRQFTEVFRIMSSTFSQSRFLYAAVVT</variation>
    <location>
        <begin position="1180"/>
        <end position="1211"/>
    </location>
</feature>
<feature type="splice variant" id="VSP_036405" description="In isoform 4." evidence="6">
    <original>N</original>
    <variation>NFCFIISPFTKSEIILCQYRKSHDKVYPKY</variation>
    <location>
        <position position="1485"/>
    </location>
</feature>
<feature type="sequence conflict" description="In Ref. 2; BAC87032." evidence="8" ref="2">
    <original>L</original>
    <variation>F</variation>
    <location>
        <position position="1791"/>
    </location>
</feature>
<dbReference type="EC" id="2.3.2.27"/>
<dbReference type="EMBL" id="AB095944">
    <property type="protein sequence ID" value="BAC23120.1"/>
    <property type="status" value="ALT_INIT"/>
    <property type="molecule type" value="mRNA"/>
</dbReference>
<dbReference type="EMBL" id="AK126998">
    <property type="protein sequence ID" value="BAC86783.1"/>
    <property type="status" value="ALT_INIT"/>
    <property type="molecule type" value="mRNA"/>
</dbReference>
<dbReference type="EMBL" id="AK127553">
    <property type="protein sequence ID" value="BAC87032.1"/>
    <property type="status" value="ALT_INIT"/>
    <property type="molecule type" value="mRNA"/>
</dbReference>
<dbReference type="EMBL" id="AK128490">
    <property type="protein sequence ID" value="BAC87462.1"/>
    <property type="molecule type" value="mRNA"/>
</dbReference>
<dbReference type="EMBL" id="AK303062">
    <property type="protein sequence ID" value="BAG64179.1"/>
    <property type="status" value="ALT_INIT"/>
    <property type="molecule type" value="mRNA"/>
</dbReference>
<dbReference type="EMBL" id="AC009967">
    <property type="status" value="NOT_ANNOTATED_CDS"/>
    <property type="molecule type" value="Genomic_DNA"/>
</dbReference>
<dbReference type="EMBL" id="AC079151">
    <property type="status" value="NOT_ANNOTATED_CDS"/>
    <property type="molecule type" value="Genomic_DNA"/>
</dbReference>
<dbReference type="EMBL" id="AC092641">
    <property type="protein sequence ID" value="AAY14890.1"/>
    <property type="molecule type" value="Genomic_DNA"/>
</dbReference>
<dbReference type="EMBL" id="AL834144">
    <property type="protein sequence ID" value="CAD38857.1"/>
    <property type="status" value="ALT_SEQ"/>
    <property type="molecule type" value="mRNA"/>
</dbReference>
<dbReference type="CCDS" id="CCDS2238.2">
    <molecule id="Q6ZT12-1"/>
</dbReference>
<dbReference type="RefSeq" id="NP_742067.3">
    <molecule id="Q6ZT12-1"/>
    <property type="nucleotide sequence ID" value="NM_172070.3"/>
</dbReference>
<dbReference type="SMR" id="Q6ZT12"/>
<dbReference type="BioGRID" id="126237">
    <property type="interactions" value="119"/>
</dbReference>
<dbReference type="FunCoup" id="Q6ZT12">
    <property type="interactions" value="1088"/>
</dbReference>
<dbReference type="IntAct" id="Q6ZT12">
    <property type="interactions" value="84"/>
</dbReference>
<dbReference type="MINT" id="Q6ZT12"/>
<dbReference type="STRING" id="9606.ENSP00000396068"/>
<dbReference type="GlyGen" id="Q6ZT12">
    <property type="glycosylation" value="1 site, 1 O-linked glycan (1 site)"/>
</dbReference>
<dbReference type="iPTMnet" id="Q6ZT12"/>
<dbReference type="PhosphoSitePlus" id="Q6ZT12"/>
<dbReference type="SwissPalm" id="Q6ZT12"/>
<dbReference type="BioMuta" id="UBR3"/>
<dbReference type="DMDM" id="166214992"/>
<dbReference type="jPOST" id="Q6ZT12"/>
<dbReference type="MassIVE" id="Q6ZT12"/>
<dbReference type="PaxDb" id="9606-ENSP00000396068"/>
<dbReference type="PeptideAtlas" id="Q6ZT12"/>
<dbReference type="ProteomicsDB" id="68252">
    <molecule id="Q6ZT12-1"/>
</dbReference>
<dbReference type="ProteomicsDB" id="68253">
    <molecule id="Q6ZT12-2"/>
</dbReference>
<dbReference type="ProteomicsDB" id="68254">
    <molecule id="Q6ZT12-3"/>
</dbReference>
<dbReference type="ProteomicsDB" id="68255">
    <molecule id="Q6ZT12-4"/>
</dbReference>
<dbReference type="Pumba" id="Q6ZT12"/>
<dbReference type="Antibodypedia" id="33822">
    <property type="antibodies" value="41 antibodies from 14 providers"/>
</dbReference>
<dbReference type="DNASU" id="130507"/>
<dbReference type="Ensembl" id="ENST00000272793.11">
    <molecule id="Q6ZT12-1"/>
    <property type="protein sequence ID" value="ENSP00000272793.5"/>
    <property type="gene ID" value="ENSG00000144357.18"/>
</dbReference>
<dbReference type="GeneID" id="130507"/>
<dbReference type="KEGG" id="hsa:130507"/>
<dbReference type="MANE-Select" id="ENST00000272793.11">
    <property type="protein sequence ID" value="ENSP00000272793.5"/>
    <property type="RefSeq nucleotide sequence ID" value="NM_172070.4"/>
    <property type="RefSeq protein sequence ID" value="NP_742067.3"/>
</dbReference>
<dbReference type="UCSC" id="uc010zdi.3">
    <molecule id="Q6ZT12-1"/>
    <property type="organism name" value="human"/>
</dbReference>
<dbReference type="AGR" id="HGNC:30467"/>
<dbReference type="CTD" id="130507"/>
<dbReference type="DisGeNET" id="130507"/>
<dbReference type="GeneCards" id="UBR3"/>
<dbReference type="HGNC" id="HGNC:30467">
    <property type="gene designation" value="UBR3"/>
</dbReference>
<dbReference type="HPA" id="ENSG00000144357">
    <property type="expression patterns" value="Tissue enhanced (skeletal muscle, tongue)"/>
</dbReference>
<dbReference type="MalaCards" id="UBR3"/>
<dbReference type="MIM" id="613831">
    <property type="type" value="gene"/>
</dbReference>
<dbReference type="neXtProt" id="NX_Q6ZT12"/>
<dbReference type="OpenTargets" id="ENSG00000144357"/>
<dbReference type="PharmGKB" id="PA162407919"/>
<dbReference type="VEuPathDB" id="HostDB:ENSG00000144357"/>
<dbReference type="eggNOG" id="KOG1139">
    <property type="taxonomic scope" value="Eukaryota"/>
</dbReference>
<dbReference type="GeneTree" id="ENSGT00950000183075"/>
<dbReference type="HOGENOM" id="CLU_000651_2_1_1"/>
<dbReference type="InParanoid" id="Q6ZT12"/>
<dbReference type="OMA" id="LTRAWCT"/>
<dbReference type="OrthoDB" id="15304at2759"/>
<dbReference type="PAN-GO" id="Q6ZT12">
    <property type="GO annotations" value="5 GO annotations based on evolutionary models"/>
</dbReference>
<dbReference type="PhylomeDB" id="Q6ZT12"/>
<dbReference type="TreeFam" id="TF323875"/>
<dbReference type="PathwayCommons" id="Q6ZT12"/>
<dbReference type="SignaLink" id="Q6ZT12"/>
<dbReference type="UniPathway" id="UPA00143"/>
<dbReference type="BioGRID-ORCS" id="130507">
    <property type="hits" value="12 hits in 1197 CRISPR screens"/>
</dbReference>
<dbReference type="ChiTaRS" id="UBR3">
    <property type="organism name" value="human"/>
</dbReference>
<dbReference type="GenomeRNAi" id="130507"/>
<dbReference type="Pharos" id="Q6ZT12">
    <property type="development level" value="Tbio"/>
</dbReference>
<dbReference type="PRO" id="PR:Q6ZT12"/>
<dbReference type="Proteomes" id="UP000005640">
    <property type="component" value="Chromosome 2"/>
</dbReference>
<dbReference type="RNAct" id="Q6ZT12">
    <property type="molecule type" value="protein"/>
</dbReference>
<dbReference type="Bgee" id="ENSG00000144357">
    <property type="expression patterns" value="Expressed in vastus lateralis and 190 other cell types or tissues"/>
</dbReference>
<dbReference type="ExpressionAtlas" id="Q6ZT12">
    <property type="expression patterns" value="baseline and differential"/>
</dbReference>
<dbReference type="GO" id="GO:0005737">
    <property type="term" value="C:cytoplasm"/>
    <property type="evidence" value="ECO:0000318"/>
    <property type="project" value="GO_Central"/>
</dbReference>
<dbReference type="GO" id="GO:0016020">
    <property type="term" value="C:membrane"/>
    <property type="evidence" value="ECO:0007669"/>
    <property type="project" value="UniProtKB-SubCell"/>
</dbReference>
<dbReference type="GO" id="GO:0000151">
    <property type="term" value="C:ubiquitin ligase complex"/>
    <property type="evidence" value="ECO:0000318"/>
    <property type="project" value="GO_Central"/>
</dbReference>
<dbReference type="GO" id="GO:0061630">
    <property type="term" value="F:ubiquitin protein ligase activity"/>
    <property type="evidence" value="ECO:0000318"/>
    <property type="project" value="GO_Central"/>
</dbReference>
<dbReference type="GO" id="GO:0004842">
    <property type="term" value="F:ubiquitin-protein transferase activity"/>
    <property type="evidence" value="ECO:0000250"/>
    <property type="project" value="UniProtKB"/>
</dbReference>
<dbReference type="GO" id="GO:0008270">
    <property type="term" value="F:zinc ion binding"/>
    <property type="evidence" value="ECO:0007669"/>
    <property type="project" value="UniProtKB-KW"/>
</dbReference>
<dbReference type="GO" id="GO:0009792">
    <property type="term" value="P:embryo development ending in birth or egg hatching"/>
    <property type="evidence" value="ECO:0000250"/>
    <property type="project" value="UniProtKB"/>
</dbReference>
<dbReference type="GO" id="GO:0001701">
    <property type="term" value="P:in utero embryonic development"/>
    <property type="evidence" value="ECO:0007669"/>
    <property type="project" value="Ensembl"/>
</dbReference>
<dbReference type="GO" id="GO:1904878">
    <property type="term" value="P:negative regulation of calcium ion transmembrane transport via high voltage-gated calcium channel"/>
    <property type="evidence" value="ECO:0007669"/>
    <property type="project" value="Ensembl"/>
</dbReference>
<dbReference type="GO" id="GO:0042048">
    <property type="term" value="P:olfactory behavior"/>
    <property type="evidence" value="ECO:0007669"/>
    <property type="project" value="Ensembl"/>
</dbReference>
<dbReference type="GO" id="GO:0045732">
    <property type="term" value="P:positive regulation of protein catabolic process"/>
    <property type="evidence" value="ECO:0007669"/>
    <property type="project" value="Ensembl"/>
</dbReference>
<dbReference type="GO" id="GO:0016567">
    <property type="term" value="P:protein ubiquitination"/>
    <property type="evidence" value="ECO:0000318"/>
    <property type="project" value="GO_Central"/>
</dbReference>
<dbReference type="GO" id="GO:0007608">
    <property type="term" value="P:sensory perception of smell"/>
    <property type="evidence" value="ECO:0000250"/>
    <property type="project" value="UniProtKB"/>
</dbReference>
<dbReference type="GO" id="GO:0001967">
    <property type="term" value="P:suckling behavior"/>
    <property type="evidence" value="ECO:0000250"/>
    <property type="project" value="UniProtKB"/>
</dbReference>
<dbReference type="GO" id="GO:0006511">
    <property type="term" value="P:ubiquitin-dependent protein catabolic process"/>
    <property type="evidence" value="ECO:0000250"/>
    <property type="project" value="UniProtKB"/>
</dbReference>
<dbReference type="GO" id="GO:0071596">
    <property type="term" value="P:ubiquitin-dependent protein catabolic process via the N-end rule pathway"/>
    <property type="evidence" value="ECO:0000318"/>
    <property type="project" value="GO_Central"/>
</dbReference>
<dbReference type="CDD" id="cd16483">
    <property type="entry name" value="RING-H2_UBR3"/>
    <property type="match status" value="1"/>
</dbReference>
<dbReference type="CDD" id="cd19673">
    <property type="entry name" value="UBR-box_UBR3"/>
    <property type="match status" value="1"/>
</dbReference>
<dbReference type="FunFam" id="2.10.110.30:FF:000002">
    <property type="entry name" value="Putative e3 ubiquitin-protein ligase ubr3"/>
    <property type="match status" value="1"/>
</dbReference>
<dbReference type="Gene3D" id="2.10.110.30">
    <property type="match status" value="1"/>
</dbReference>
<dbReference type="InterPro" id="IPR044046">
    <property type="entry name" value="E3_ligase_UBR-like_C"/>
</dbReference>
<dbReference type="InterPro" id="IPR039164">
    <property type="entry name" value="UBR1-like"/>
</dbReference>
<dbReference type="InterPro" id="IPR055194">
    <property type="entry name" value="UBR1-like_winged-helix"/>
</dbReference>
<dbReference type="InterPro" id="IPR003126">
    <property type="entry name" value="Znf_UBR"/>
</dbReference>
<dbReference type="PANTHER" id="PTHR21497:SF39">
    <property type="entry name" value="E3 UBIQUITIN-PROTEIN LIGASE UBR3"/>
    <property type="match status" value="1"/>
</dbReference>
<dbReference type="PANTHER" id="PTHR21497">
    <property type="entry name" value="UBIQUITIN LIGASE E3 ALPHA-RELATED"/>
    <property type="match status" value="1"/>
</dbReference>
<dbReference type="Pfam" id="PF18995">
    <property type="entry name" value="PRT6_C"/>
    <property type="match status" value="1"/>
</dbReference>
<dbReference type="Pfam" id="PF22960">
    <property type="entry name" value="UBR1-like_wing"/>
    <property type="match status" value="1"/>
</dbReference>
<dbReference type="Pfam" id="PF02207">
    <property type="entry name" value="zf-UBR"/>
    <property type="match status" value="1"/>
</dbReference>
<dbReference type="SMART" id="SM00396">
    <property type="entry name" value="ZnF_UBR1"/>
    <property type="match status" value="1"/>
</dbReference>
<dbReference type="SUPFAM" id="SSF57850">
    <property type="entry name" value="RING/U-box"/>
    <property type="match status" value="1"/>
</dbReference>
<dbReference type="PROSITE" id="PS51157">
    <property type="entry name" value="ZF_UBR"/>
    <property type="match status" value="1"/>
</dbReference>
<name>UBR3_HUMAN</name>
<protein>
    <recommendedName>
        <fullName>E3 ubiquitin-protein ligase UBR3</fullName>
        <ecNumber>2.3.2.27</ecNumber>
    </recommendedName>
    <alternativeName>
        <fullName>N-recognin-3</fullName>
    </alternativeName>
    <alternativeName>
        <fullName>RING-type E3 ubiquitin transferase UBR3</fullName>
    </alternativeName>
    <alternativeName>
        <fullName>Ubiquitin-protein ligase E3-alpha-3</fullName>
    </alternativeName>
    <alternativeName>
        <fullName>Ubiquitin-protein ligase E3-alpha-III</fullName>
    </alternativeName>
    <alternativeName>
        <fullName>Zinc finger protein 650</fullName>
    </alternativeName>
</protein>
<keyword id="KW-0025">Alternative splicing</keyword>
<keyword id="KW-0175">Coiled coil</keyword>
<keyword id="KW-0472">Membrane</keyword>
<keyword id="KW-0479">Metal-binding</keyword>
<keyword id="KW-0597">Phosphoprotein</keyword>
<keyword id="KW-1267">Proteomics identification</keyword>
<keyword id="KW-1185">Reference proteome</keyword>
<keyword id="KW-0808">Transferase</keyword>
<keyword id="KW-0812">Transmembrane</keyword>
<keyword id="KW-1133">Transmembrane helix</keyword>
<keyword id="KW-0833">Ubl conjugation pathway</keyword>
<keyword id="KW-0862">Zinc</keyword>
<keyword id="KW-0863">Zinc-finger</keyword>
<gene>
    <name type="primary">UBR3</name>
    <name type="synonym">KIAA2024</name>
    <name type="synonym">ZNF650</name>
</gene>